<evidence type="ECO:0000255" key="1">
    <source>
        <dbReference type="HAMAP-Rule" id="MF_01903"/>
    </source>
</evidence>
<protein>
    <recommendedName>
        <fullName evidence="1">Xanthine-guanine phosphoribosyltransferase</fullName>
        <shortName evidence="1">XGPRT</shortName>
        <ecNumber evidence="1">2.4.2.-</ecNumber>
        <ecNumber evidence="1">2.4.2.22</ecNumber>
    </recommendedName>
    <alternativeName>
        <fullName evidence="1">Xanthine phosphoribosyltransferase</fullName>
    </alternativeName>
</protein>
<sequence>MSEKYIVTWDMLQIHARKLASRLMPSEQWKGIIAVSRGGLVPGALLARELGIRHVDTVCISSYDHDNQRELKVLKRAEGDGEGFIVIDDLVDTGGTAVAIREMYPKAHFVTIFAKPAGRPLVDDYVVDIPQDTWIEQPWDMGVVFVPPISGR</sequence>
<reference key="1">
    <citation type="journal article" date="2009" name="PLoS Genet.">
        <title>Organised genome dynamics in the Escherichia coli species results in highly diverse adaptive paths.</title>
        <authorList>
            <person name="Touchon M."/>
            <person name="Hoede C."/>
            <person name="Tenaillon O."/>
            <person name="Barbe V."/>
            <person name="Baeriswyl S."/>
            <person name="Bidet P."/>
            <person name="Bingen E."/>
            <person name="Bonacorsi S."/>
            <person name="Bouchier C."/>
            <person name="Bouvet O."/>
            <person name="Calteau A."/>
            <person name="Chiapello H."/>
            <person name="Clermont O."/>
            <person name="Cruveiller S."/>
            <person name="Danchin A."/>
            <person name="Diard M."/>
            <person name="Dossat C."/>
            <person name="Karoui M.E."/>
            <person name="Frapy E."/>
            <person name="Garry L."/>
            <person name="Ghigo J.M."/>
            <person name="Gilles A.M."/>
            <person name="Johnson J."/>
            <person name="Le Bouguenec C."/>
            <person name="Lescat M."/>
            <person name="Mangenot S."/>
            <person name="Martinez-Jehanne V."/>
            <person name="Matic I."/>
            <person name="Nassif X."/>
            <person name="Oztas S."/>
            <person name="Petit M.A."/>
            <person name="Pichon C."/>
            <person name="Rouy Z."/>
            <person name="Ruf C.S."/>
            <person name="Schneider D."/>
            <person name="Tourret J."/>
            <person name="Vacherie B."/>
            <person name="Vallenet D."/>
            <person name="Medigue C."/>
            <person name="Rocha E.P.C."/>
            <person name="Denamur E."/>
        </authorList>
    </citation>
    <scope>NUCLEOTIDE SEQUENCE [LARGE SCALE GENOMIC DNA]</scope>
    <source>
        <strain>UMN026 / ExPEC</strain>
    </source>
</reference>
<dbReference type="EC" id="2.4.2.-" evidence="1"/>
<dbReference type="EC" id="2.4.2.22" evidence="1"/>
<dbReference type="EMBL" id="CU928163">
    <property type="protein sequence ID" value="CAR11519.1"/>
    <property type="molecule type" value="Genomic_DNA"/>
</dbReference>
<dbReference type="RefSeq" id="WP_001291990.1">
    <property type="nucleotide sequence ID" value="NC_011751.1"/>
</dbReference>
<dbReference type="RefSeq" id="YP_002411073.1">
    <property type="nucleotide sequence ID" value="NC_011751.1"/>
</dbReference>
<dbReference type="SMR" id="B7N8G9"/>
<dbReference type="STRING" id="585056.ECUMN_0304"/>
<dbReference type="GeneID" id="93777155"/>
<dbReference type="KEGG" id="eum:ECUMN_0304"/>
<dbReference type="PATRIC" id="fig|585056.7.peg.499"/>
<dbReference type="HOGENOM" id="CLU_080904_3_0_6"/>
<dbReference type="UniPathway" id="UPA00602">
    <property type="reaction ID" value="UER00658"/>
</dbReference>
<dbReference type="UniPathway" id="UPA00909">
    <property type="reaction ID" value="UER00887"/>
</dbReference>
<dbReference type="Proteomes" id="UP000007097">
    <property type="component" value="Chromosome"/>
</dbReference>
<dbReference type="GO" id="GO:0005829">
    <property type="term" value="C:cytosol"/>
    <property type="evidence" value="ECO:0007669"/>
    <property type="project" value="TreeGrafter"/>
</dbReference>
<dbReference type="GO" id="GO:0005886">
    <property type="term" value="C:plasma membrane"/>
    <property type="evidence" value="ECO:0007669"/>
    <property type="project" value="UniProtKB-SubCell"/>
</dbReference>
<dbReference type="GO" id="GO:0052657">
    <property type="term" value="F:guanine phosphoribosyltransferase activity"/>
    <property type="evidence" value="ECO:0007669"/>
    <property type="project" value="RHEA"/>
</dbReference>
<dbReference type="GO" id="GO:0004422">
    <property type="term" value="F:hypoxanthine phosphoribosyltransferase activity"/>
    <property type="evidence" value="ECO:0007669"/>
    <property type="project" value="RHEA"/>
</dbReference>
<dbReference type="GO" id="GO:0000287">
    <property type="term" value="F:magnesium ion binding"/>
    <property type="evidence" value="ECO:0007669"/>
    <property type="project" value="UniProtKB-UniRule"/>
</dbReference>
<dbReference type="GO" id="GO:0000310">
    <property type="term" value="F:xanthine phosphoribosyltransferase activity"/>
    <property type="evidence" value="ECO:0007669"/>
    <property type="project" value="UniProtKB-UniRule"/>
</dbReference>
<dbReference type="GO" id="GO:0032263">
    <property type="term" value="P:GMP salvage"/>
    <property type="evidence" value="ECO:0007669"/>
    <property type="project" value="UniProtKB-UniRule"/>
</dbReference>
<dbReference type="GO" id="GO:0032264">
    <property type="term" value="P:IMP salvage"/>
    <property type="evidence" value="ECO:0007669"/>
    <property type="project" value="TreeGrafter"/>
</dbReference>
<dbReference type="GO" id="GO:0006166">
    <property type="term" value="P:purine ribonucleoside salvage"/>
    <property type="evidence" value="ECO:0007669"/>
    <property type="project" value="UniProtKB-KW"/>
</dbReference>
<dbReference type="GO" id="GO:0032265">
    <property type="term" value="P:XMP salvage"/>
    <property type="evidence" value="ECO:0007669"/>
    <property type="project" value="UniProtKB-UniRule"/>
</dbReference>
<dbReference type="CDD" id="cd06223">
    <property type="entry name" value="PRTases_typeI"/>
    <property type="match status" value="1"/>
</dbReference>
<dbReference type="FunFam" id="3.40.50.2020:FF:000009">
    <property type="entry name" value="Xanthine phosphoribosyltransferase"/>
    <property type="match status" value="1"/>
</dbReference>
<dbReference type="Gene3D" id="3.40.50.2020">
    <property type="match status" value="1"/>
</dbReference>
<dbReference type="HAMAP" id="MF_01903">
    <property type="entry name" value="XGPRT"/>
    <property type="match status" value="1"/>
</dbReference>
<dbReference type="InterPro" id="IPR000836">
    <property type="entry name" value="PRibTrfase_dom"/>
</dbReference>
<dbReference type="InterPro" id="IPR029057">
    <property type="entry name" value="PRTase-like"/>
</dbReference>
<dbReference type="InterPro" id="IPR023747">
    <property type="entry name" value="Xanthine_Guanine_PRibTrfase"/>
</dbReference>
<dbReference type="NCBIfam" id="NF006613">
    <property type="entry name" value="PRK09177.1"/>
    <property type="match status" value="1"/>
</dbReference>
<dbReference type="PANTHER" id="PTHR39563">
    <property type="entry name" value="XANTHINE PHOSPHORIBOSYLTRANSFERASE"/>
    <property type="match status" value="1"/>
</dbReference>
<dbReference type="PANTHER" id="PTHR39563:SF1">
    <property type="entry name" value="XANTHINE-GUANINE PHOSPHORIBOSYLTRANSFERASE"/>
    <property type="match status" value="1"/>
</dbReference>
<dbReference type="Pfam" id="PF00156">
    <property type="entry name" value="Pribosyltran"/>
    <property type="match status" value="1"/>
</dbReference>
<dbReference type="SUPFAM" id="SSF53271">
    <property type="entry name" value="PRTase-like"/>
    <property type="match status" value="1"/>
</dbReference>
<dbReference type="PROSITE" id="PS00103">
    <property type="entry name" value="PUR_PYR_PR_TRANSFER"/>
    <property type="match status" value="1"/>
</dbReference>
<feature type="chain" id="PRO_1000188745" description="Xanthine-guanine phosphoribosyltransferase">
    <location>
        <begin position="1"/>
        <end position="152"/>
    </location>
</feature>
<feature type="binding site" evidence="1">
    <location>
        <begin position="37"/>
        <end position="38"/>
    </location>
    <ligand>
        <name>5-phospho-alpha-D-ribose 1-diphosphate</name>
        <dbReference type="ChEBI" id="CHEBI:58017"/>
    </ligand>
</feature>
<feature type="binding site" evidence="1">
    <location>
        <position position="69"/>
    </location>
    <ligand>
        <name>5-phospho-alpha-D-ribose 1-diphosphate</name>
        <dbReference type="ChEBI" id="CHEBI:58017"/>
    </ligand>
</feature>
<feature type="binding site" evidence="1">
    <location>
        <position position="69"/>
    </location>
    <ligand>
        <name>GMP</name>
        <dbReference type="ChEBI" id="CHEBI:58115"/>
    </ligand>
</feature>
<feature type="binding site" evidence="1">
    <location>
        <begin position="88"/>
        <end position="96"/>
    </location>
    <ligand>
        <name>5-phospho-alpha-D-ribose 1-diphosphate</name>
        <dbReference type="ChEBI" id="CHEBI:58017"/>
    </ligand>
</feature>
<feature type="binding site" evidence="1">
    <location>
        <position position="89"/>
    </location>
    <ligand>
        <name>Mg(2+)</name>
        <dbReference type="ChEBI" id="CHEBI:18420"/>
    </ligand>
</feature>
<feature type="binding site" evidence="1">
    <location>
        <begin position="92"/>
        <end position="96"/>
    </location>
    <ligand>
        <name>GMP</name>
        <dbReference type="ChEBI" id="CHEBI:58115"/>
    </ligand>
</feature>
<feature type="binding site" evidence="1">
    <location>
        <position position="92"/>
    </location>
    <ligand>
        <name>guanine</name>
        <dbReference type="ChEBI" id="CHEBI:16235"/>
    </ligand>
</feature>
<feature type="binding site" evidence="1">
    <location>
        <position position="92"/>
    </location>
    <ligand>
        <name>xanthine</name>
        <dbReference type="ChEBI" id="CHEBI:17712"/>
    </ligand>
</feature>
<feature type="binding site" evidence="1">
    <location>
        <begin position="134"/>
        <end position="135"/>
    </location>
    <ligand>
        <name>GMP</name>
        <dbReference type="ChEBI" id="CHEBI:58115"/>
    </ligand>
</feature>
<feature type="binding site" evidence="1">
    <location>
        <position position="135"/>
    </location>
    <ligand>
        <name>guanine</name>
        <dbReference type="ChEBI" id="CHEBI:16235"/>
    </ligand>
</feature>
<feature type="binding site" evidence="1">
    <location>
        <position position="135"/>
    </location>
    <ligand>
        <name>xanthine</name>
        <dbReference type="ChEBI" id="CHEBI:17712"/>
    </ligand>
</feature>
<proteinExistence type="inferred from homology"/>
<gene>
    <name evidence="1" type="primary">gpt</name>
    <name type="ordered locus">ECUMN_0304</name>
</gene>
<name>XGPT_ECOLU</name>
<comment type="function">
    <text evidence="1">Purine salvage pathway enzyme that catalyzes the transfer of the ribosyl-5-phosphate group from 5-phospho-alpha-D-ribose 1-diphosphate (PRPP) to the N9 position of the 6-oxopurines guanine and xanthine to form the corresponding ribonucleotides GMP (guanosine 5'-monophosphate) and XMP (xanthosine 5'-monophosphate), with the release of PPi. To a lesser extent, also acts on hypoxanthine.</text>
</comment>
<comment type="catalytic activity">
    <reaction evidence="1">
        <text>GMP + diphosphate = guanine + 5-phospho-alpha-D-ribose 1-diphosphate</text>
        <dbReference type="Rhea" id="RHEA:25424"/>
        <dbReference type="ChEBI" id="CHEBI:16235"/>
        <dbReference type="ChEBI" id="CHEBI:33019"/>
        <dbReference type="ChEBI" id="CHEBI:58017"/>
        <dbReference type="ChEBI" id="CHEBI:58115"/>
    </reaction>
    <physiologicalReaction direction="right-to-left" evidence="1">
        <dbReference type="Rhea" id="RHEA:25426"/>
    </physiologicalReaction>
</comment>
<comment type="catalytic activity">
    <reaction evidence="1">
        <text>XMP + diphosphate = xanthine + 5-phospho-alpha-D-ribose 1-diphosphate</text>
        <dbReference type="Rhea" id="RHEA:10800"/>
        <dbReference type="ChEBI" id="CHEBI:17712"/>
        <dbReference type="ChEBI" id="CHEBI:33019"/>
        <dbReference type="ChEBI" id="CHEBI:57464"/>
        <dbReference type="ChEBI" id="CHEBI:58017"/>
        <dbReference type="EC" id="2.4.2.22"/>
    </reaction>
    <physiologicalReaction direction="right-to-left" evidence="1">
        <dbReference type="Rhea" id="RHEA:10802"/>
    </physiologicalReaction>
</comment>
<comment type="catalytic activity">
    <reaction evidence="1">
        <text>IMP + diphosphate = hypoxanthine + 5-phospho-alpha-D-ribose 1-diphosphate</text>
        <dbReference type="Rhea" id="RHEA:17973"/>
        <dbReference type="ChEBI" id="CHEBI:17368"/>
        <dbReference type="ChEBI" id="CHEBI:33019"/>
        <dbReference type="ChEBI" id="CHEBI:58017"/>
        <dbReference type="ChEBI" id="CHEBI:58053"/>
    </reaction>
    <physiologicalReaction direction="right-to-left" evidence="1">
        <dbReference type="Rhea" id="RHEA:17975"/>
    </physiologicalReaction>
</comment>
<comment type="cofactor">
    <cofactor evidence="1">
        <name>Mg(2+)</name>
        <dbReference type="ChEBI" id="CHEBI:18420"/>
    </cofactor>
</comment>
<comment type="pathway">
    <text evidence="1">Purine metabolism; GMP biosynthesis via salvage pathway; GMP from guanine: step 1/1.</text>
</comment>
<comment type="pathway">
    <text evidence="1">Purine metabolism; XMP biosynthesis via salvage pathway; XMP from xanthine: step 1/1.</text>
</comment>
<comment type="subunit">
    <text evidence="1">Homotetramer.</text>
</comment>
<comment type="subcellular location">
    <subcellularLocation>
        <location evidence="1">Cell inner membrane</location>
        <topology evidence="1">Peripheral membrane protein</topology>
    </subcellularLocation>
</comment>
<comment type="similarity">
    <text evidence="1">Belongs to the purine/pyrimidine phosphoribosyltransferase family. XGPT subfamily.</text>
</comment>
<organism>
    <name type="scientific">Escherichia coli O17:K52:H18 (strain UMN026 / ExPEC)</name>
    <dbReference type="NCBI Taxonomy" id="585056"/>
    <lineage>
        <taxon>Bacteria</taxon>
        <taxon>Pseudomonadati</taxon>
        <taxon>Pseudomonadota</taxon>
        <taxon>Gammaproteobacteria</taxon>
        <taxon>Enterobacterales</taxon>
        <taxon>Enterobacteriaceae</taxon>
        <taxon>Escherichia</taxon>
    </lineage>
</organism>
<keyword id="KW-0997">Cell inner membrane</keyword>
<keyword id="KW-1003">Cell membrane</keyword>
<keyword id="KW-0328">Glycosyltransferase</keyword>
<keyword id="KW-0460">Magnesium</keyword>
<keyword id="KW-0472">Membrane</keyword>
<keyword id="KW-0479">Metal-binding</keyword>
<keyword id="KW-0660">Purine salvage</keyword>
<keyword id="KW-0808">Transferase</keyword>
<accession>B7N8G9</accession>